<comment type="similarity">
    <text evidence="1">Belongs to the UPF0285 family.</text>
</comment>
<name>Y1666_METM7</name>
<feature type="chain" id="PRO_1000149873" description="UPF0285 protein MmarC7_1666">
    <location>
        <begin position="1"/>
        <end position="325"/>
    </location>
</feature>
<accession>A6VJU8</accession>
<dbReference type="EMBL" id="CP000745">
    <property type="protein sequence ID" value="ABR66724.1"/>
    <property type="molecule type" value="Genomic_DNA"/>
</dbReference>
<dbReference type="SMR" id="A6VJU8"/>
<dbReference type="STRING" id="426368.MmarC7_1666"/>
<dbReference type="KEGG" id="mmz:MmarC7_1666"/>
<dbReference type="eggNOG" id="arCOG04885">
    <property type="taxonomic scope" value="Archaea"/>
</dbReference>
<dbReference type="HOGENOM" id="CLU_846254_0_0_2"/>
<dbReference type="OrthoDB" id="235676at2157"/>
<dbReference type="HAMAP" id="MF_01087">
    <property type="entry name" value="UPF0285"/>
    <property type="match status" value="1"/>
</dbReference>
<dbReference type="InterPro" id="IPR043129">
    <property type="entry name" value="ATPase_NBD"/>
</dbReference>
<dbReference type="InterPro" id="IPR016735">
    <property type="entry name" value="Methan_mark_12"/>
</dbReference>
<dbReference type="NCBIfam" id="TIGR03281">
    <property type="entry name" value="methan_mark_12"/>
    <property type="match status" value="1"/>
</dbReference>
<dbReference type="PIRSF" id="PIRSF018783">
    <property type="entry name" value="UCP018783"/>
    <property type="match status" value="1"/>
</dbReference>
<dbReference type="SUPFAM" id="SSF53067">
    <property type="entry name" value="Actin-like ATPase domain"/>
    <property type="match status" value="1"/>
</dbReference>
<reference key="1">
    <citation type="submission" date="2007-06" db="EMBL/GenBank/DDBJ databases">
        <title>Complete sequence of Methanococcus maripaludis C7.</title>
        <authorList>
            <consortium name="US DOE Joint Genome Institute"/>
            <person name="Copeland A."/>
            <person name="Lucas S."/>
            <person name="Lapidus A."/>
            <person name="Barry K."/>
            <person name="Glavina del Rio T."/>
            <person name="Dalin E."/>
            <person name="Tice H."/>
            <person name="Pitluck S."/>
            <person name="Clum A."/>
            <person name="Schmutz J."/>
            <person name="Larimer F."/>
            <person name="Land M."/>
            <person name="Hauser L."/>
            <person name="Kyrpides N."/>
            <person name="Anderson I."/>
            <person name="Sieprawska-Lupa M."/>
            <person name="Whitman W.B."/>
            <person name="Richardson P."/>
        </authorList>
    </citation>
    <scope>NUCLEOTIDE SEQUENCE [LARGE SCALE GENOMIC DNA]</scope>
    <source>
        <strain>C7 / ATCC BAA-1331</strain>
    </source>
</reference>
<sequence length="325" mass="35307">MIVVGIDHGTSGITACVMENKTVKSIFKMKRTEINENSFLKELEKHVNLNDIDLMGVCYSMGDGIDKITDIKKVENRGVINLEGIGKKVGGGTKVYDEIKSSNIPAVVIPGLHKGVKSMDERFNALFSHIASPEKISICYNAYKTFGFENFILSDISSNTVTLLIKNGKIFGGFDACVGAVGILHGPIDLELIRNIDSKKITANEAFSKAGVVKITDSYKGVEDTKFEIMSNYKKDKKCTLAVDSLVLSVSMEINSLMFLNHDKNVVLAGSIGTWKNPNISEMIKENIDGNVLVLDGDSGAVGSAMIAEDILNGKREILGISVDF</sequence>
<evidence type="ECO:0000255" key="1">
    <source>
        <dbReference type="HAMAP-Rule" id="MF_01087"/>
    </source>
</evidence>
<protein>
    <recommendedName>
        <fullName evidence="1">UPF0285 protein MmarC7_1666</fullName>
    </recommendedName>
</protein>
<organism>
    <name type="scientific">Methanococcus maripaludis (strain C7 / ATCC BAA-1331)</name>
    <dbReference type="NCBI Taxonomy" id="426368"/>
    <lineage>
        <taxon>Archaea</taxon>
        <taxon>Methanobacteriati</taxon>
        <taxon>Methanobacteriota</taxon>
        <taxon>Methanomada group</taxon>
        <taxon>Methanococci</taxon>
        <taxon>Methanococcales</taxon>
        <taxon>Methanococcaceae</taxon>
        <taxon>Methanococcus</taxon>
    </lineage>
</organism>
<gene>
    <name type="ordered locus">MmarC7_1666</name>
</gene>
<proteinExistence type="inferred from homology"/>